<proteinExistence type="inferred from homology"/>
<evidence type="ECO:0000255" key="1">
    <source>
        <dbReference type="HAMAP-Rule" id="MF_01561"/>
    </source>
</evidence>
<comment type="cofactor">
    <cofactor evidence="1">
        <name>Zn(2+)</name>
        <dbReference type="ChEBI" id="CHEBI:29105"/>
    </cofactor>
    <text evidence="1">Binds 3 Zn(2+) ions per subunit.</text>
</comment>
<comment type="subunit">
    <text evidence="1">Homotrimer.</text>
</comment>
<comment type="similarity">
    <text evidence="1">Belongs to the PHP family.</text>
</comment>
<dbReference type="EC" id="3.1.3.-" evidence="1"/>
<dbReference type="EMBL" id="CU928158">
    <property type="protein sequence ID" value="CAQ89405.1"/>
    <property type="molecule type" value="Genomic_DNA"/>
</dbReference>
<dbReference type="RefSeq" id="WP_000283682.1">
    <property type="nucleotide sequence ID" value="NC_011740.1"/>
</dbReference>
<dbReference type="SMR" id="B7LTA1"/>
<dbReference type="GeneID" id="75057073"/>
<dbReference type="KEGG" id="efe:EFER_1896"/>
<dbReference type="HOGENOM" id="CLU_061999_0_1_6"/>
<dbReference type="OrthoDB" id="9808747at2"/>
<dbReference type="Proteomes" id="UP000000745">
    <property type="component" value="Chromosome"/>
</dbReference>
<dbReference type="GO" id="GO:0005829">
    <property type="term" value="C:cytosol"/>
    <property type="evidence" value="ECO:0007669"/>
    <property type="project" value="TreeGrafter"/>
</dbReference>
<dbReference type="GO" id="GO:0016791">
    <property type="term" value="F:phosphatase activity"/>
    <property type="evidence" value="ECO:0007669"/>
    <property type="project" value="UniProtKB-UniRule"/>
</dbReference>
<dbReference type="GO" id="GO:0008270">
    <property type="term" value="F:zinc ion binding"/>
    <property type="evidence" value="ECO:0007669"/>
    <property type="project" value="UniProtKB-UniRule"/>
</dbReference>
<dbReference type="GO" id="GO:0071978">
    <property type="term" value="P:bacterial-type flagellum-dependent swarming motility"/>
    <property type="evidence" value="ECO:0007669"/>
    <property type="project" value="TreeGrafter"/>
</dbReference>
<dbReference type="CDD" id="cd07437">
    <property type="entry name" value="PHP_HisPPase_Ycdx_like"/>
    <property type="match status" value="1"/>
</dbReference>
<dbReference type="FunFam" id="3.20.20.140:FF:000008">
    <property type="entry name" value="Probable phosphatase YcdX"/>
    <property type="match status" value="1"/>
</dbReference>
<dbReference type="Gene3D" id="3.20.20.140">
    <property type="entry name" value="Metal-dependent hydrolases"/>
    <property type="match status" value="1"/>
</dbReference>
<dbReference type="HAMAP" id="MF_01561">
    <property type="entry name" value="YcdX_phosphat"/>
    <property type="match status" value="1"/>
</dbReference>
<dbReference type="InterPro" id="IPR023710">
    <property type="entry name" value="Phosphatase_YcdX_put"/>
</dbReference>
<dbReference type="InterPro" id="IPR004013">
    <property type="entry name" value="PHP_dom"/>
</dbReference>
<dbReference type="InterPro" id="IPR050243">
    <property type="entry name" value="PHP_phosphatase"/>
</dbReference>
<dbReference type="InterPro" id="IPR003141">
    <property type="entry name" value="Pol/His_phosphatase_N"/>
</dbReference>
<dbReference type="InterPro" id="IPR016195">
    <property type="entry name" value="Pol/histidinol_Pase-like"/>
</dbReference>
<dbReference type="NCBIfam" id="NF006702">
    <property type="entry name" value="PRK09248.1"/>
    <property type="match status" value="1"/>
</dbReference>
<dbReference type="PANTHER" id="PTHR36928">
    <property type="entry name" value="PHOSPHATASE YCDX-RELATED"/>
    <property type="match status" value="1"/>
</dbReference>
<dbReference type="PANTHER" id="PTHR36928:SF1">
    <property type="entry name" value="PHOSPHATASE YCDX-RELATED"/>
    <property type="match status" value="1"/>
</dbReference>
<dbReference type="Pfam" id="PF02811">
    <property type="entry name" value="PHP"/>
    <property type="match status" value="1"/>
</dbReference>
<dbReference type="SMART" id="SM00481">
    <property type="entry name" value="POLIIIAc"/>
    <property type="match status" value="1"/>
</dbReference>
<dbReference type="SUPFAM" id="SSF89550">
    <property type="entry name" value="PHP domain-like"/>
    <property type="match status" value="1"/>
</dbReference>
<sequence length="245" mass="26827">MYPVDLHMHTVASTHAYSTLSDYIAQAKRKGIKLFSITDHGPDMADAPHHWHFINMRIWPRIVDGVGILRGIEANIKNTEGEIDCFGQMYDSLDLIIAGFHEPVFAPHDKATNTQAMIATIASGNVHIISHPGNPKYPIDIMAVAEAAAKHQVALEINNSSFIHSRKGSEDNCRAVAAAVRDAGGWIALGSDSHTAYTLGEFDEALKIIEAVDFPEDRILNVSPARMLGFLESRGMTPIAEFAEL</sequence>
<feature type="chain" id="PRO_1000147137" description="Probable phosphatase YcdX">
    <location>
        <begin position="1"/>
        <end position="245"/>
    </location>
</feature>
<feature type="binding site" evidence="1">
    <location>
        <position position="7"/>
    </location>
    <ligand>
        <name>Zn(2+)</name>
        <dbReference type="ChEBI" id="CHEBI:29105"/>
        <label>1</label>
    </ligand>
</feature>
<feature type="binding site" evidence="1">
    <location>
        <position position="9"/>
    </location>
    <ligand>
        <name>Zn(2+)</name>
        <dbReference type="ChEBI" id="CHEBI:29105"/>
        <label>1</label>
    </ligand>
</feature>
<feature type="binding site" evidence="1">
    <location>
        <position position="15"/>
    </location>
    <ligand>
        <name>Zn(2+)</name>
        <dbReference type="ChEBI" id="CHEBI:29105"/>
        <label>2</label>
    </ligand>
</feature>
<feature type="binding site" evidence="1">
    <location>
        <position position="40"/>
    </location>
    <ligand>
        <name>Zn(2+)</name>
        <dbReference type="ChEBI" id="CHEBI:29105"/>
        <label>2</label>
    </ligand>
</feature>
<feature type="binding site" evidence="1">
    <location>
        <position position="73"/>
    </location>
    <ligand>
        <name>Zn(2+)</name>
        <dbReference type="ChEBI" id="CHEBI:29105"/>
        <label>1</label>
    </ligand>
</feature>
<feature type="binding site" evidence="1">
    <location>
        <position position="73"/>
    </location>
    <ligand>
        <name>Zn(2+)</name>
        <dbReference type="ChEBI" id="CHEBI:29105"/>
        <label>3</label>
    </ligand>
</feature>
<feature type="binding site" evidence="1">
    <location>
        <position position="101"/>
    </location>
    <ligand>
        <name>Zn(2+)</name>
        <dbReference type="ChEBI" id="CHEBI:29105"/>
        <label>3</label>
    </ligand>
</feature>
<feature type="binding site" evidence="1">
    <location>
        <position position="131"/>
    </location>
    <ligand>
        <name>Zn(2+)</name>
        <dbReference type="ChEBI" id="CHEBI:29105"/>
        <label>3</label>
    </ligand>
</feature>
<feature type="binding site" evidence="1">
    <location>
        <position position="192"/>
    </location>
    <ligand>
        <name>Zn(2+)</name>
        <dbReference type="ChEBI" id="CHEBI:29105"/>
        <label>1</label>
    </ligand>
</feature>
<feature type="binding site" evidence="1">
    <location>
        <position position="194"/>
    </location>
    <ligand>
        <name>Zn(2+)</name>
        <dbReference type="ChEBI" id="CHEBI:29105"/>
        <label>2</label>
    </ligand>
</feature>
<reference key="1">
    <citation type="journal article" date="2009" name="PLoS Genet.">
        <title>Organised genome dynamics in the Escherichia coli species results in highly diverse adaptive paths.</title>
        <authorList>
            <person name="Touchon M."/>
            <person name="Hoede C."/>
            <person name="Tenaillon O."/>
            <person name="Barbe V."/>
            <person name="Baeriswyl S."/>
            <person name="Bidet P."/>
            <person name="Bingen E."/>
            <person name="Bonacorsi S."/>
            <person name="Bouchier C."/>
            <person name="Bouvet O."/>
            <person name="Calteau A."/>
            <person name="Chiapello H."/>
            <person name="Clermont O."/>
            <person name="Cruveiller S."/>
            <person name="Danchin A."/>
            <person name="Diard M."/>
            <person name="Dossat C."/>
            <person name="Karoui M.E."/>
            <person name="Frapy E."/>
            <person name="Garry L."/>
            <person name="Ghigo J.M."/>
            <person name="Gilles A.M."/>
            <person name="Johnson J."/>
            <person name="Le Bouguenec C."/>
            <person name="Lescat M."/>
            <person name="Mangenot S."/>
            <person name="Martinez-Jehanne V."/>
            <person name="Matic I."/>
            <person name="Nassif X."/>
            <person name="Oztas S."/>
            <person name="Petit M.A."/>
            <person name="Pichon C."/>
            <person name="Rouy Z."/>
            <person name="Ruf C.S."/>
            <person name="Schneider D."/>
            <person name="Tourret J."/>
            <person name="Vacherie B."/>
            <person name="Vallenet D."/>
            <person name="Medigue C."/>
            <person name="Rocha E.P.C."/>
            <person name="Denamur E."/>
        </authorList>
    </citation>
    <scope>NUCLEOTIDE SEQUENCE [LARGE SCALE GENOMIC DNA]</scope>
    <source>
        <strain>ATCC 35469 / DSM 13698 / BCRC 15582 / CCUG 18766 / IAM 14443 / JCM 21226 / LMG 7866 / NBRC 102419 / NCTC 12128 / CDC 0568-73</strain>
    </source>
</reference>
<name>YCDX_ESCF3</name>
<accession>B7LTA1</accession>
<gene>
    <name evidence="1" type="primary">ycdX</name>
    <name type="ordered locus">EFER_1896</name>
</gene>
<protein>
    <recommendedName>
        <fullName evidence="1">Probable phosphatase YcdX</fullName>
        <ecNumber evidence="1">3.1.3.-</ecNumber>
    </recommendedName>
</protein>
<keyword id="KW-0378">Hydrolase</keyword>
<keyword id="KW-0479">Metal-binding</keyword>
<keyword id="KW-0862">Zinc</keyword>
<organism>
    <name type="scientific">Escherichia fergusonii (strain ATCC 35469 / DSM 13698 / CCUG 18766 / IAM 14443 / JCM 21226 / LMG 7866 / NBRC 102419 / NCTC 12128 / CDC 0568-73)</name>
    <dbReference type="NCBI Taxonomy" id="585054"/>
    <lineage>
        <taxon>Bacteria</taxon>
        <taxon>Pseudomonadati</taxon>
        <taxon>Pseudomonadota</taxon>
        <taxon>Gammaproteobacteria</taxon>
        <taxon>Enterobacterales</taxon>
        <taxon>Enterobacteriaceae</taxon>
        <taxon>Escherichia</taxon>
    </lineage>
</organism>